<organism>
    <name type="scientific">Chlorobaculum tepidum (strain ATCC 49652 / DSM 12025 / NBRC 103806 / TLS)</name>
    <name type="common">Chlorobium tepidum</name>
    <dbReference type="NCBI Taxonomy" id="194439"/>
    <lineage>
        <taxon>Bacteria</taxon>
        <taxon>Pseudomonadati</taxon>
        <taxon>Chlorobiota</taxon>
        <taxon>Chlorobiia</taxon>
        <taxon>Chlorobiales</taxon>
        <taxon>Chlorobiaceae</taxon>
        <taxon>Chlorobaculum</taxon>
    </lineage>
</organism>
<accession>Q8KGE7</accession>
<evidence type="ECO:0000255" key="1"/>
<evidence type="ECO:0000255" key="2">
    <source>
        <dbReference type="HAMAP-Rule" id="MF_01393"/>
    </source>
</evidence>
<evidence type="ECO:0000305" key="3"/>
<proteinExistence type="inferred from homology"/>
<dbReference type="EMBL" id="AE006470">
    <property type="protein sequence ID" value="AAM71269.1"/>
    <property type="status" value="ALT_INIT"/>
    <property type="molecule type" value="Genomic_DNA"/>
</dbReference>
<dbReference type="RefSeq" id="NP_660927.2">
    <property type="nucleotide sequence ID" value="NC_002932.3"/>
</dbReference>
<dbReference type="RefSeq" id="WP_010931715.1">
    <property type="nucleotide sequence ID" value="NC_002932.3"/>
</dbReference>
<dbReference type="SMR" id="Q8KGE7"/>
<dbReference type="STRING" id="194439.CT0021"/>
<dbReference type="EnsemblBacteria" id="AAM71269">
    <property type="protein sequence ID" value="AAM71269"/>
    <property type="gene ID" value="CT0021"/>
</dbReference>
<dbReference type="KEGG" id="cte:CT0021"/>
<dbReference type="PATRIC" id="fig|194439.7.peg.21"/>
<dbReference type="eggNOG" id="COG0356">
    <property type="taxonomic scope" value="Bacteria"/>
</dbReference>
<dbReference type="HOGENOM" id="CLU_041018_0_0_10"/>
<dbReference type="OrthoDB" id="9809130at2"/>
<dbReference type="Proteomes" id="UP000001007">
    <property type="component" value="Chromosome"/>
</dbReference>
<dbReference type="GO" id="GO:0005886">
    <property type="term" value="C:plasma membrane"/>
    <property type="evidence" value="ECO:0007669"/>
    <property type="project" value="UniProtKB-SubCell"/>
</dbReference>
<dbReference type="GO" id="GO:0045259">
    <property type="term" value="C:proton-transporting ATP synthase complex"/>
    <property type="evidence" value="ECO:0007669"/>
    <property type="project" value="UniProtKB-KW"/>
</dbReference>
<dbReference type="GO" id="GO:0046933">
    <property type="term" value="F:proton-transporting ATP synthase activity, rotational mechanism"/>
    <property type="evidence" value="ECO:0007669"/>
    <property type="project" value="UniProtKB-UniRule"/>
</dbReference>
<dbReference type="CDD" id="cd00310">
    <property type="entry name" value="ATP-synt_Fo_a_6"/>
    <property type="match status" value="1"/>
</dbReference>
<dbReference type="Gene3D" id="1.20.120.220">
    <property type="entry name" value="ATP synthase, F0 complex, subunit A"/>
    <property type="match status" value="1"/>
</dbReference>
<dbReference type="HAMAP" id="MF_01393">
    <property type="entry name" value="ATP_synth_a_bact"/>
    <property type="match status" value="1"/>
</dbReference>
<dbReference type="InterPro" id="IPR000568">
    <property type="entry name" value="ATP_synth_F0_asu"/>
</dbReference>
<dbReference type="InterPro" id="IPR023011">
    <property type="entry name" value="ATP_synth_F0_asu_AS"/>
</dbReference>
<dbReference type="InterPro" id="IPR045083">
    <property type="entry name" value="ATP_synth_F0_asu_bact/mt"/>
</dbReference>
<dbReference type="InterPro" id="IPR035908">
    <property type="entry name" value="F0_ATP_A_sf"/>
</dbReference>
<dbReference type="NCBIfam" id="TIGR01131">
    <property type="entry name" value="ATP_synt_6_or_A"/>
    <property type="match status" value="1"/>
</dbReference>
<dbReference type="NCBIfam" id="NF009953">
    <property type="entry name" value="PRK13419.1"/>
    <property type="match status" value="1"/>
</dbReference>
<dbReference type="PANTHER" id="PTHR11410">
    <property type="entry name" value="ATP SYNTHASE SUBUNIT A"/>
    <property type="match status" value="1"/>
</dbReference>
<dbReference type="PANTHER" id="PTHR11410:SF0">
    <property type="entry name" value="ATP SYNTHASE SUBUNIT A"/>
    <property type="match status" value="1"/>
</dbReference>
<dbReference type="Pfam" id="PF00119">
    <property type="entry name" value="ATP-synt_A"/>
    <property type="match status" value="1"/>
</dbReference>
<dbReference type="PRINTS" id="PR00123">
    <property type="entry name" value="ATPASEA"/>
</dbReference>
<dbReference type="SUPFAM" id="SSF81336">
    <property type="entry name" value="F1F0 ATP synthase subunit A"/>
    <property type="match status" value="1"/>
</dbReference>
<dbReference type="PROSITE" id="PS00449">
    <property type="entry name" value="ATPASE_A"/>
    <property type="match status" value="1"/>
</dbReference>
<protein>
    <recommendedName>
        <fullName evidence="2">ATP synthase subunit a 2</fullName>
    </recommendedName>
    <alternativeName>
        <fullName evidence="2">ATP synthase F0 sector subunit a 2</fullName>
    </alternativeName>
    <alternativeName>
        <fullName evidence="2">F-ATPase subunit 6 2</fullName>
    </alternativeName>
</protein>
<name>ATP62_CHLTE</name>
<reference key="1">
    <citation type="journal article" date="2002" name="Proc. Natl. Acad. Sci. U.S.A.">
        <title>The complete genome sequence of Chlorobium tepidum TLS, a photosynthetic, anaerobic, green-sulfur bacterium.</title>
        <authorList>
            <person name="Eisen J.A."/>
            <person name="Nelson K.E."/>
            <person name="Paulsen I.T."/>
            <person name="Heidelberg J.F."/>
            <person name="Wu M."/>
            <person name="Dodson R.J."/>
            <person name="DeBoy R.T."/>
            <person name="Gwinn M.L."/>
            <person name="Nelson W.C."/>
            <person name="Haft D.H."/>
            <person name="Hickey E.K."/>
            <person name="Peterson J.D."/>
            <person name="Durkin A.S."/>
            <person name="Kolonay J.F."/>
            <person name="Yang F."/>
            <person name="Holt I.E."/>
            <person name="Umayam L.A."/>
            <person name="Mason T.M."/>
            <person name="Brenner M."/>
            <person name="Shea T.P."/>
            <person name="Parksey D.S."/>
            <person name="Nierman W.C."/>
            <person name="Feldblyum T.V."/>
            <person name="Hansen C.L."/>
            <person name="Craven M.B."/>
            <person name="Radune D."/>
            <person name="Vamathevan J.J."/>
            <person name="Khouri H.M."/>
            <person name="White O."/>
            <person name="Gruber T.M."/>
            <person name="Ketchum K.A."/>
            <person name="Venter J.C."/>
            <person name="Tettelin H."/>
            <person name="Bryant D.A."/>
            <person name="Fraser C.M."/>
        </authorList>
    </citation>
    <scope>NUCLEOTIDE SEQUENCE [LARGE SCALE GENOMIC DNA]</scope>
    <source>
        <strain>ATCC 49652 / DSM 12025 / NBRC 103806 / TLS</strain>
    </source>
</reference>
<sequence>MRKKAISRILALVVPVLLSLNSQAFATSVQDESPVTGSAVEAVHTVPSTVAAPVAGHAEAAAGQAAKAEEKPGDLIMHHILDNSTFSFEPFGEVHLPHLEVAGFDISITKHVVMIWLAAILLVVIASAAGASVKKMSANQAPKGVANVFESLVDFISNDVAKPNIGHGYEKFLPYLLTVFFFILVCNLLGLIPYGATATGNINVTLTLSVFTFVITQFSAFKAQGVKGYLQHLTAGTHWALWIIMVPIEILGQFTKPFALTIRLFANMTAGHIIILSLFFISFILKSYIVAVAVSIPFAIFIYLLELFVAFLQAYVFTMLSALFIGLATAHSDSHDGHELEATARHGDGLTV</sequence>
<keyword id="KW-0066">ATP synthesis</keyword>
<keyword id="KW-0997">Cell inner membrane</keyword>
<keyword id="KW-1003">Cell membrane</keyword>
<keyword id="KW-0138">CF(0)</keyword>
<keyword id="KW-0375">Hydrogen ion transport</keyword>
<keyword id="KW-0406">Ion transport</keyword>
<keyword id="KW-0472">Membrane</keyword>
<keyword id="KW-1185">Reference proteome</keyword>
<keyword id="KW-0732">Signal</keyword>
<keyword id="KW-0812">Transmembrane</keyword>
<keyword id="KW-1133">Transmembrane helix</keyword>
<keyword id="KW-0813">Transport</keyword>
<feature type="signal peptide" evidence="1">
    <location>
        <begin position="1"/>
        <end position="26"/>
    </location>
</feature>
<feature type="chain" id="PRO_0000362271" description="ATP synthase subunit a 2">
    <location>
        <begin position="27"/>
        <end position="352"/>
    </location>
</feature>
<feature type="transmembrane region" description="Helical" evidence="2">
    <location>
        <begin position="112"/>
        <end position="132"/>
    </location>
</feature>
<feature type="transmembrane region" description="Helical" evidence="2">
    <location>
        <begin position="172"/>
        <end position="192"/>
    </location>
</feature>
<feature type="transmembrane region" description="Helical" evidence="2">
    <location>
        <begin position="195"/>
        <end position="215"/>
    </location>
</feature>
<feature type="transmembrane region" description="Helical" evidence="2">
    <location>
        <begin position="232"/>
        <end position="252"/>
    </location>
</feature>
<feature type="transmembrane region" description="Helical" evidence="2">
    <location>
        <begin position="264"/>
        <end position="284"/>
    </location>
</feature>
<feature type="transmembrane region" description="Helical" evidence="2">
    <location>
        <begin position="289"/>
        <end position="309"/>
    </location>
</feature>
<feature type="transmembrane region" description="Helical" evidence="2">
    <location>
        <begin position="310"/>
        <end position="330"/>
    </location>
</feature>
<comment type="function">
    <text evidence="2">Key component of the proton channel; it plays a direct role in the translocation of protons across the membrane.</text>
</comment>
<comment type="subunit">
    <text evidence="2">F-type ATPases have 2 components, CF(1) - the catalytic core - and CF(0) - the membrane proton channel. CF(1) has five subunits: alpha(3), beta(3), gamma(1), delta(1), epsilon(1). CF(0) has four main subunits: a, b, b' and c.</text>
</comment>
<comment type="subcellular location">
    <subcellularLocation>
        <location evidence="2">Cell inner membrane</location>
        <topology evidence="2">Multi-pass membrane protein</topology>
    </subcellularLocation>
</comment>
<comment type="similarity">
    <text evidence="2">Belongs to the ATPase A chain family.</text>
</comment>
<comment type="sequence caution" evidence="3">
    <conflict type="erroneous initiation">
        <sequence resource="EMBL-CDS" id="AAM71269"/>
    </conflict>
</comment>
<gene>
    <name evidence="2" type="primary">atpB2</name>
    <name type="ordered locus">CT0021</name>
</gene>